<comment type="function">
    <text evidence="8 9 10">Essential component of the BHC complex, a corepressor complex that represses transcription of neuron-specific genes in non-neuronal cells. The BHC complex is recruited at RE1/NRSE sites by REST and acts by deacetylating and demethylating specific sites on histones, thereby acting as a chromatin modifier. In the BHC complex, it serves as a molecular beacon for the recruitment of molecular machinery, including MeCP2 and SUV39H1, that imposes silencing across a chromosomal interval. Plays a central role in demethylation of Lys-4 of histone H3 by promoting demethylase activity of KDM1A on core histones and nucleosomal substrates. It also protects KDM1A from the proteasome. Component of a RCOR/GFI/KDM1A/HDAC complex that suppresses, via histone deacetylase (HDAC) recruitment, a number of genes implicated in multilineage blood cell development and controls hematopoietic differentiation.</text>
</comment>
<comment type="subunit">
    <text evidence="1 9 11 12">Component of a BHC histone deacetylase complex that contains HDAC1, HDAC2, HMG20B/BRAF35, KDM1A, RCOR1/CoREST and PHF21A/BHC80. The BHC complex may also contain ZMYM2, ZNF217, ZMYM3, GSE1 and GTF2I. Interacts with REST. Interacts with the SMARCE1/BAF57, suggesting that the BHC complex may recruit the ATP-dependent chromatin-remodeling SWI-SNF complex (By similarity). Interacts directly with GFI1 and GFI1B in a RCOR/GFI/KDM1A/HDAC complex. Interacts with INMS1. Interacts with SOX2 (PubMed:30442713).</text>
</comment>
<comment type="interaction">
    <interactant intactId="EBI-2337309">
        <id>Q8CFE3</id>
    </interactant>
    <interactant intactId="EBI-1216284">
        <id>Q6ZQ88</id>
        <label>Kdm1a</label>
    </interactant>
    <organismsDiffer>false</organismsDiffer>
    <experiments>2</experiments>
</comment>
<comment type="interaction">
    <interactant intactId="EBI-2337309">
        <id>Q8CFE3</id>
    </interactant>
    <interactant intactId="EBI-2337255">
        <id>Q06219</id>
        <label>Nr4a2</label>
    </interactant>
    <organismsDiffer>false</organismsDiffer>
    <experiments>5</experiments>
</comment>
<comment type="subcellular location">
    <subcellularLocation>
        <location evidence="4 5">Nucleus</location>
    </subcellularLocation>
</comment>
<comment type="tissue specificity">
    <text evidence="10">Expressed in the external germinal layer (EGL) and internal granular layer (IGL) of the cerebellum and in Purkinje cells (at protein level).</text>
</comment>
<comment type="developmental stage">
    <text evidence="7">At embryonic day 8.5, it is highly expressed in the head mesenchyme, but neither in the somites nor in the presomitic mesoderm. By day 11.5 it is expressed fairly ubiquitously throughout the embryo.</text>
</comment>
<comment type="induction">
    <text evidence="10">Down-regulated by the transcriptional repressor ZEB1 during NEUROD2-induced neurogenesis.</text>
</comment>
<comment type="domain">
    <text evidence="1">The SANT domains may bridge the nucleosomal substrates and the demethylase KDM1A.</text>
</comment>
<comment type="similarity">
    <text evidence="13">Belongs to the CoREST family.</text>
</comment>
<comment type="sequence caution" evidence="13">
    <conflict type="erroneous initiation">
        <sequence resource="EMBL-CDS" id="AAH42731"/>
    </conflict>
    <text>Truncated N-terminus.</text>
</comment>
<feature type="chain" id="PRO_0000226774" description="REST corepressor 1">
    <location>
        <begin position="1"/>
        <end position="480"/>
    </location>
</feature>
<feature type="domain" description="ELM2" evidence="4">
    <location>
        <begin position="97"/>
        <end position="183"/>
    </location>
</feature>
<feature type="domain" description="SANT 1" evidence="5">
    <location>
        <begin position="184"/>
        <end position="235"/>
    </location>
</feature>
<feature type="domain" description="SANT 2" evidence="5">
    <location>
        <begin position="375"/>
        <end position="426"/>
    </location>
</feature>
<feature type="region of interest" description="Disordered" evidence="6">
    <location>
        <begin position="1"/>
        <end position="105"/>
    </location>
</feature>
<feature type="region of interest" description="Interaction with HDAC1" evidence="2">
    <location>
        <begin position="72"/>
        <end position="251"/>
    </location>
</feature>
<feature type="region of interest" description="Disordered" evidence="6">
    <location>
        <begin position="238"/>
        <end position="308"/>
    </location>
</feature>
<feature type="region of interest" description="Interaction with KDM1A" evidence="2">
    <location>
        <begin position="290"/>
        <end position="378"/>
    </location>
</feature>
<feature type="region of interest" description="Disordered" evidence="6">
    <location>
        <begin position="436"/>
        <end position="466"/>
    </location>
</feature>
<feature type="coiled-coil region" evidence="3">
    <location>
        <begin position="238"/>
        <end position="265"/>
    </location>
</feature>
<feature type="coiled-coil region" evidence="3">
    <location>
        <begin position="328"/>
        <end position="363"/>
    </location>
</feature>
<feature type="compositionally biased region" description="Low complexity" evidence="6">
    <location>
        <begin position="21"/>
        <end position="58"/>
    </location>
</feature>
<feature type="compositionally biased region" description="Low complexity" evidence="6">
    <location>
        <begin position="66"/>
        <end position="89"/>
    </location>
</feature>
<feature type="compositionally biased region" description="Basic and acidic residues" evidence="6">
    <location>
        <begin position="272"/>
        <end position="282"/>
    </location>
</feature>
<feature type="modified residue" description="Phosphoserine" evidence="2">
    <location>
        <position position="121"/>
    </location>
</feature>
<feature type="modified residue" description="Phosphoserine" evidence="14 15 16">
    <location>
        <position position="254"/>
    </location>
</feature>
<feature type="modified residue" description="Phosphoserine" evidence="16">
    <location>
        <position position="454"/>
    </location>
</feature>
<feature type="cross-link" description="Glycyl lysine isopeptide (Lys-Gly) (interchain with G-Cter in SUMO2)" evidence="2">
    <location>
        <position position="116"/>
    </location>
</feature>
<feature type="cross-link" description="Glycyl lysine isopeptide (Lys-Gly) (interchain with G-Cter in SUMO2)" evidence="2">
    <location>
        <position position="291"/>
    </location>
</feature>
<feature type="cross-link" description="Glycyl lysine isopeptide (Lys-Gly) (interchain with G-Cter in SUMO2)" evidence="2">
    <location>
        <position position="460"/>
    </location>
</feature>
<feature type="sequence conflict" description="In Ref. 2; BAC36804/BAE21612." evidence="13" ref="2">
    <original>N</original>
    <variation>Y</variation>
    <location>
        <position position="444"/>
    </location>
</feature>
<gene>
    <name type="primary">Rcor1</name>
    <name type="synonym">D12Wsu95e</name>
    <name type="synonym">Kiaa0071</name>
</gene>
<reference key="1">
    <citation type="journal article" date="2009" name="PLoS Biol.">
        <title>Lineage-specific biology revealed by a finished genome assembly of the mouse.</title>
        <authorList>
            <person name="Church D.M."/>
            <person name="Goodstadt L."/>
            <person name="Hillier L.W."/>
            <person name="Zody M.C."/>
            <person name="Goldstein S."/>
            <person name="She X."/>
            <person name="Bult C.J."/>
            <person name="Agarwala R."/>
            <person name="Cherry J.L."/>
            <person name="DiCuccio M."/>
            <person name="Hlavina W."/>
            <person name="Kapustin Y."/>
            <person name="Meric P."/>
            <person name="Maglott D."/>
            <person name="Birtle Z."/>
            <person name="Marques A.C."/>
            <person name="Graves T."/>
            <person name="Zhou S."/>
            <person name="Teague B."/>
            <person name="Potamousis K."/>
            <person name="Churas C."/>
            <person name="Place M."/>
            <person name="Herschleb J."/>
            <person name="Runnheim R."/>
            <person name="Forrest D."/>
            <person name="Amos-Landgraf J."/>
            <person name="Schwartz D.C."/>
            <person name="Cheng Z."/>
            <person name="Lindblad-Toh K."/>
            <person name="Eichler E.E."/>
            <person name="Ponting C.P."/>
        </authorList>
    </citation>
    <scope>NUCLEOTIDE SEQUENCE [LARGE SCALE GENOMIC DNA]</scope>
    <source>
        <strain>C57BL/6J</strain>
    </source>
</reference>
<reference key="2">
    <citation type="journal article" date="2005" name="Science">
        <title>The transcriptional landscape of the mammalian genome.</title>
        <authorList>
            <person name="Carninci P."/>
            <person name="Kasukawa T."/>
            <person name="Katayama S."/>
            <person name="Gough J."/>
            <person name="Frith M.C."/>
            <person name="Maeda N."/>
            <person name="Oyama R."/>
            <person name="Ravasi T."/>
            <person name="Lenhard B."/>
            <person name="Wells C."/>
            <person name="Kodzius R."/>
            <person name="Shimokawa K."/>
            <person name="Bajic V.B."/>
            <person name="Brenner S.E."/>
            <person name="Batalov S."/>
            <person name="Forrest A.R."/>
            <person name="Zavolan M."/>
            <person name="Davis M.J."/>
            <person name="Wilming L.G."/>
            <person name="Aidinis V."/>
            <person name="Allen J.E."/>
            <person name="Ambesi-Impiombato A."/>
            <person name="Apweiler R."/>
            <person name="Aturaliya R.N."/>
            <person name="Bailey T.L."/>
            <person name="Bansal M."/>
            <person name="Baxter L."/>
            <person name="Beisel K.W."/>
            <person name="Bersano T."/>
            <person name="Bono H."/>
            <person name="Chalk A.M."/>
            <person name="Chiu K.P."/>
            <person name="Choudhary V."/>
            <person name="Christoffels A."/>
            <person name="Clutterbuck D.R."/>
            <person name="Crowe M.L."/>
            <person name="Dalla E."/>
            <person name="Dalrymple B.P."/>
            <person name="de Bono B."/>
            <person name="Della Gatta G."/>
            <person name="di Bernardo D."/>
            <person name="Down T."/>
            <person name="Engstrom P."/>
            <person name="Fagiolini M."/>
            <person name="Faulkner G."/>
            <person name="Fletcher C.F."/>
            <person name="Fukushima T."/>
            <person name="Furuno M."/>
            <person name="Futaki S."/>
            <person name="Gariboldi M."/>
            <person name="Georgii-Hemming P."/>
            <person name="Gingeras T.R."/>
            <person name="Gojobori T."/>
            <person name="Green R.E."/>
            <person name="Gustincich S."/>
            <person name="Harbers M."/>
            <person name="Hayashi Y."/>
            <person name="Hensch T.K."/>
            <person name="Hirokawa N."/>
            <person name="Hill D."/>
            <person name="Huminiecki L."/>
            <person name="Iacono M."/>
            <person name="Ikeo K."/>
            <person name="Iwama A."/>
            <person name="Ishikawa T."/>
            <person name="Jakt M."/>
            <person name="Kanapin A."/>
            <person name="Katoh M."/>
            <person name="Kawasawa Y."/>
            <person name="Kelso J."/>
            <person name="Kitamura H."/>
            <person name="Kitano H."/>
            <person name="Kollias G."/>
            <person name="Krishnan S.P."/>
            <person name="Kruger A."/>
            <person name="Kummerfeld S.K."/>
            <person name="Kurochkin I.V."/>
            <person name="Lareau L.F."/>
            <person name="Lazarevic D."/>
            <person name="Lipovich L."/>
            <person name="Liu J."/>
            <person name="Liuni S."/>
            <person name="McWilliam S."/>
            <person name="Madan Babu M."/>
            <person name="Madera M."/>
            <person name="Marchionni L."/>
            <person name="Matsuda H."/>
            <person name="Matsuzawa S."/>
            <person name="Miki H."/>
            <person name="Mignone F."/>
            <person name="Miyake S."/>
            <person name="Morris K."/>
            <person name="Mottagui-Tabar S."/>
            <person name="Mulder N."/>
            <person name="Nakano N."/>
            <person name="Nakauchi H."/>
            <person name="Ng P."/>
            <person name="Nilsson R."/>
            <person name="Nishiguchi S."/>
            <person name="Nishikawa S."/>
            <person name="Nori F."/>
            <person name="Ohara O."/>
            <person name="Okazaki Y."/>
            <person name="Orlando V."/>
            <person name="Pang K.C."/>
            <person name="Pavan W.J."/>
            <person name="Pavesi G."/>
            <person name="Pesole G."/>
            <person name="Petrovsky N."/>
            <person name="Piazza S."/>
            <person name="Reed J."/>
            <person name="Reid J.F."/>
            <person name="Ring B.Z."/>
            <person name="Ringwald M."/>
            <person name="Rost B."/>
            <person name="Ruan Y."/>
            <person name="Salzberg S.L."/>
            <person name="Sandelin A."/>
            <person name="Schneider C."/>
            <person name="Schoenbach C."/>
            <person name="Sekiguchi K."/>
            <person name="Semple C.A."/>
            <person name="Seno S."/>
            <person name="Sessa L."/>
            <person name="Sheng Y."/>
            <person name="Shibata Y."/>
            <person name="Shimada H."/>
            <person name="Shimada K."/>
            <person name="Silva D."/>
            <person name="Sinclair B."/>
            <person name="Sperling S."/>
            <person name="Stupka E."/>
            <person name="Sugiura K."/>
            <person name="Sultana R."/>
            <person name="Takenaka Y."/>
            <person name="Taki K."/>
            <person name="Tammoja K."/>
            <person name="Tan S.L."/>
            <person name="Tang S."/>
            <person name="Taylor M.S."/>
            <person name="Tegner J."/>
            <person name="Teichmann S.A."/>
            <person name="Ueda H.R."/>
            <person name="van Nimwegen E."/>
            <person name="Verardo R."/>
            <person name="Wei C.L."/>
            <person name="Yagi K."/>
            <person name="Yamanishi H."/>
            <person name="Zabarovsky E."/>
            <person name="Zhu S."/>
            <person name="Zimmer A."/>
            <person name="Hide W."/>
            <person name="Bult C."/>
            <person name="Grimmond S.M."/>
            <person name="Teasdale R.D."/>
            <person name="Liu E.T."/>
            <person name="Brusic V."/>
            <person name="Quackenbush J."/>
            <person name="Wahlestedt C."/>
            <person name="Mattick J.S."/>
            <person name="Hume D.A."/>
            <person name="Kai C."/>
            <person name="Sasaki D."/>
            <person name="Tomaru Y."/>
            <person name="Fukuda S."/>
            <person name="Kanamori-Katayama M."/>
            <person name="Suzuki M."/>
            <person name="Aoki J."/>
            <person name="Arakawa T."/>
            <person name="Iida J."/>
            <person name="Imamura K."/>
            <person name="Itoh M."/>
            <person name="Kato T."/>
            <person name="Kawaji H."/>
            <person name="Kawagashira N."/>
            <person name="Kawashima T."/>
            <person name="Kojima M."/>
            <person name="Kondo S."/>
            <person name="Konno H."/>
            <person name="Nakano K."/>
            <person name="Ninomiya N."/>
            <person name="Nishio T."/>
            <person name="Okada M."/>
            <person name="Plessy C."/>
            <person name="Shibata K."/>
            <person name="Shiraki T."/>
            <person name="Suzuki S."/>
            <person name="Tagami M."/>
            <person name="Waki K."/>
            <person name="Watahiki A."/>
            <person name="Okamura-Oho Y."/>
            <person name="Suzuki H."/>
            <person name="Kawai J."/>
            <person name="Hayashizaki Y."/>
        </authorList>
    </citation>
    <scope>NUCLEOTIDE SEQUENCE [LARGE SCALE MRNA] OF 1-120 AND 252-480</scope>
    <source>
        <strain>C57BL/6J</strain>
        <tissue>Testis</tissue>
    </source>
</reference>
<reference key="3">
    <citation type="journal article" date="2004" name="Genome Res.">
        <title>The status, quality, and expansion of the NIH full-length cDNA project: the Mammalian Gene Collection (MGC).</title>
        <authorList>
            <consortium name="The MGC Project Team"/>
        </authorList>
    </citation>
    <scope>NUCLEOTIDE SEQUENCE [LARGE SCALE MRNA] OF 66-480</scope>
    <source>
        <strain>NMRI</strain>
        <tissue>Mammary tumor</tissue>
    </source>
</reference>
<reference key="4">
    <citation type="journal article" date="2002" name="DNA Res.">
        <title>Prediction of the coding sequences of mouse homologues of KIAA gene: I. The complete nucleotide sequences of 100 mouse KIAA-homologous cDNAs identified by screening of terminal sequences of cDNA clones randomly sampled from size-fractionated libraries.</title>
        <authorList>
            <person name="Okazaki N."/>
            <person name="Kikuno R."/>
            <person name="Ohara R."/>
            <person name="Inamoto S."/>
            <person name="Hara Y."/>
            <person name="Nagase T."/>
            <person name="Ohara O."/>
            <person name="Koga H."/>
        </authorList>
    </citation>
    <scope>NUCLEOTIDE SEQUENCE [LARGE SCALE MRNA] OF 165-480</scope>
    <source>
        <tissue>Brain</tissue>
    </source>
</reference>
<reference key="5">
    <citation type="journal article" date="2000" name="J. Biol. Chem.">
        <title>The co-repressor mSin3A is a functional component of the REST-CoREST repressor complex.</title>
        <authorList>
            <person name="Grimes J.A."/>
            <person name="Nielsen S.J."/>
            <person name="Battaglioli E."/>
            <person name="Miska E.A."/>
            <person name="Speh J.C."/>
            <person name="Berry D.L."/>
            <person name="Atouf F."/>
            <person name="Holdener B.C."/>
            <person name="Mandel G."/>
            <person name="Kouzarides T."/>
        </authorList>
    </citation>
    <scope>DEVELOPMENTAL STAGE</scope>
</reference>
<reference key="6">
    <citation type="journal article" date="2005" name="Cell">
        <title>REST and its corepressors mediate plasticity of neuronal gene chromatin throughout neurogenesis.</title>
        <authorList>
            <person name="Ballas N."/>
            <person name="Grunseich C."/>
            <person name="Lu D.D."/>
            <person name="Speh J.C."/>
            <person name="Mandel G."/>
        </authorList>
    </citation>
    <scope>FUNCTION</scope>
</reference>
<reference key="7">
    <citation type="journal article" date="2007" name="Mol. Cell">
        <title>Epigenetic regulation of hematopoietic differentiation by Gfi-1 and Gfi-1b is mediated by the cofactors CoREST and LSD1.</title>
        <authorList>
            <person name="Saleque S."/>
            <person name="Kim J."/>
            <person name="Rooke H.M."/>
            <person name="Orkin S.H."/>
        </authorList>
    </citation>
    <scope>IDENTIFICATION BY MASS SPECTROMETRY AS A COMPONENT OF A GFI-RCOR-KDM1A-HDAC COMPLEX</scope>
    <scope>INTERACTION WITH GFI1 AND GFI1B</scope>
    <scope>FUNCTION</scope>
</reference>
<reference key="8">
    <citation type="journal article" date="2007" name="Proc. Natl. Acad. Sci. U.S.A.">
        <title>Large-scale phosphorylation analysis of mouse liver.</title>
        <authorList>
            <person name="Villen J."/>
            <person name="Beausoleil S.A."/>
            <person name="Gerber S.A."/>
            <person name="Gygi S.P."/>
        </authorList>
    </citation>
    <scope>PHOSPHORYLATION [LARGE SCALE ANALYSIS] AT SER-254</scope>
    <scope>IDENTIFICATION BY MASS SPECTROMETRY [LARGE SCALE ANALYSIS]</scope>
    <source>
        <tissue>Liver</tissue>
    </source>
</reference>
<reference key="9">
    <citation type="journal article" date="2009" name="Immunity">
        <title>The phagosomal proteome in interferon-gamma-activated macrophages.</title>
        <authorList>
            <person name="Trost M."/>
            <person name="English L."/>
            <person name="Lemieux S."/>
            <person name="Courcelles M."/>
            <person name="Desjardins M."/>
            <person name="Thibault P."/>
        </authorList>
    </citation>
    <scope>PHOSPHORYLATION [LARGE SCALE ANALYSIS] AT SER-254</scope>
    <scope>IDENTIFICATION BY MASS SPECTROMETRY [LARGE SCALE ANALYSIS]</scope>
</reference>
<reference key="10">
    <citation type="journal article" date="2010" name="Cell">
        <title>A tissue-specific atlas of mouse protein phosphorylation and expression.</title>
        <authorList>
            <person name="Huttlin E.L."/>
            <person name="Jedrychowski M.P."/>
            <person name="Elias J.E."/>
            <person name="Goswami T."/>
            <person name="Rad R."/>
            <person name="Beausoleil S.A."/>
            <person name="Villen J."/>
            <person name="Haas W."/>
            <person name="Sowa M.E."/>
            <person name="Gygi S.P."/>
        </authorList>
    </citation>
    <scope>PHOSPHORYLATION [LARGE SCALE ANALYSIS] AT SER-254 AND SER-454</scope>
    <scope>IDENTIFICATION BY MASS SPECTROMETRY [LARGE SCALE ANALYSIS]</scope>
    <source>
        <tissue>Brain</tissue>
        <tissue>Heart</tissue>
        <tissue>Kidney</tissue>
        <tissue>Lung</tissue>
        <tissue>Spleen</tissue>
    </source>
</reference>
<reference key="11">
    <citation type="journal article" date="2010" name="Mol. Cell. Neurosci.">
        <title>Transcriptional inhibition of REST by NeuroD2 during neuronal differentiation.</title>
        <authorList>
            <person name="Ravanpay A.C."/>
            <person name="Hansen S.J."/>
            <person name="Olson J.M."/>
        </authorList>
    </citation>
    <scope>FUNCTION</scope>
    <scope>INDUCTION</scope>
    <scope>TISSUE SPECIFICITY</scope>
</reference>
<reference key="12">
    <citation type="journal article" date="2013" name="Development">
        <title>Insm1 controls development of pituitary endocrine cells and requires a SNAG domain for function and for recruitment of histone-modifying factors.</title>
        <authorList>
            <person name="Welcker J.E."/>
            <person name="Hernandez-Miranda L.R."/>
            <person name="Paul F.E."/>
            <person name="Jia S."/>
            <person name="Ivanov A."/>
            <person name="Selbach M."/>
            <person name="Birchmeier C."/>
        </authorList>
    </citation>
    <scope>INTERACTION WITH INMS1</scope>
</reference>
<reference key="13">
    <citation type="journal article" date="2019" name="J. Biol. Chem.">
        <title>Proteolysis of methylated SOX2 protein is regulated by L3MBTL3 and CRL4-DCAF5 ubiquitin ligase.</title>
        <authorList>
            <person name="Zhang C."/>
            <person name="Leng F."/>
            <person name="Saxena L."/>
            <person name="Hoang N."/>
            <person name="Yu J."/>
            <person name="Alejo S."/>
            <person name="Lee L."/>
            <person name="Qi D."/>
            <person name="Lu F."/>
            <person name="Sun H."/>
            <person name="Zhang H."/>
        </authorList>
    </citation>
    <scope>INTERACTION WITH SOX2</scope>
</reference>
<name>RCOR1_MOUSE</name>
<evidence type="ECO:0000250" key="1"/>
<evidence type="ECO:0000250" key="2">
    <source>
        <dbReference type="UniProtKB" id="Q9UKL0"/>
    </source>
</evidence>
<evidence type="ECO:0000255" key="3"/>
<evidence type="ECO:0000255" key="4">
    <source>
        <dbReference type="PROSITE-ProRule" id="PRU00512"/>
    </source>
</evidence>
<evidence type="ECO:0000255" key="5">
    <source>
        <dbReference type="PROSITE-ProRule" id="PRU00624"/>
    </source>
</evidence>
<evidence type="ECO:0000256" key="6">
    <source>
        <dbReference type="SAM" id="MobiDB-lite"/>
    </source>
</evidence>
<evidence type="ECO:0000269" key="7">
    <source>
    </source>
</evidence>
<evidence type="ECO:0000269" key="8">
    <source>
    </source>
</evidence>
<evidence type="ECO:0000269" key="9">
    <source>
    </source>
</evidence>
<evidence type="ECO:0000269" key="10">
    <source>
    </source>
</evidence>
<evidence type="ECO:0000269" key="11">
    <source>
    </source>
</evidence>
<evidence type="ECO:0000269" key="12">
    <source>
    </source>
</evidence>
<evidence type="ECO:0000305" key="13"/>
<evidence type="ECO:0007744" key="14">
    <source>
    </source>
</evidence>
<evidence type="ECO:0007744" key="15">
    <source>
    </source>
</evidence>
<evidence type="ECO:0007744" key="16">
    <source>
    </source>
</evidence>
<accession>Q8CFE3</accession>
<accession>K3W4P9</accession>
<accession>Q3V092</accession>
<accession>Q8BK28</accession>
<accession>Q8CHI2</accession>
<dbReference type="EMBL" id="AC122023">
    <property type="status" value="NOT_ANNOTATED_CDS"/>
    <property type="molecule type" value="Genomic_DNA"/>
</dbReference>
<dbReference type="EMBL" id="AC153152">
    <property type="status" value="NOT_ANNOTATED_CDS"/>
    <property type="molecule type" value="Genomic_DNA"/>
</dbReference>
<dbReference type="EMBL" id="AK077445">
    <property type="protein sequence ID" value="BAC36804.1"/>
    <property type="molecule type" value="mRNA"/>
</dbReference>
<dbReference type="EMBL" id="AK133352">
    <property type="protein sequence ID" value="BAE21612.1"/>
    <property type="molecule type" value="mRNA"/>
</dbReference>
<dbReference type="EMBL" id="BY729958">
    <property type="status" value="NOT_ANNOTATED_CDS"/>
    <property type="molecule type" value="mRNA"/>
</dbReference>
<dbReference type="EMBL" id="BC042731">
    <property type="protein sequence ID" value="AAH42731.1"/>
    <property type="status" value="ALT_INIT"/>
    <property type="molecule type" value="mRNA"/>
</dbReference>
<dbReference type="EMBL" id="AB093210">
    <property type="protein sequence ID" value="BAC41394.1"/>
    <property type="molecule type" value="mRNA"/>
</dbReference>
<dbReference type="CCDS" id="CCDS49179.2"/>
<dbReference type="RefSeq" id="NP_932140.2">
    <property type="nucleotide sequence ID" value="NM_198023.3"/>
</dbReference>
<dbReference type="RefSeq" id="XP_006515823.1">
    <property type="nucleotide sequence ID" value="XM_006515760.3"/>
</dbReference>
<dbReference type="SMR" id="Q8CFE3"/>
<dbReference type="BioGRID" id="229971">
    <property type="interactions" value="5"/>
</dbReference>
<dbReference type="CORUM" id="Q8CFE3"/>
<dbReference type="DIP" id="DIP-48899N"/>
<dbReference type="FunCoup" id="Q8CFE3">
    <property type="interactions" value="2249"/>
</dbReference>
<dbReference type="IntAct" id="Q8CFE3">
    <property type="interactions" value="8"/>
</dbReference>
<dbReference type="MINT" id="Q8CFE3"/>
<dbReference type="STRING" id="10090.ENSMUSP00000112089"/>
<dbReference type="GlyGen" id="Q8CFE3">
    <property type="glycosylation" value="2 sites, 1 N-linked glycan (1 site), 1 O-linked glycan (1 site)"/>
</dbReference>
<dbReference type="iPTMnet" id="Q8CFE3"/>
<dbReference type="PhosphoSitePlus" id="Q8CFE3"/>
<dbReference type="jPOST" id="Q8CFE3"/>
<dbReference type="PaxDb" id="10090-ENSMUSP00000082034"/>
<dbReference type="ProteomicsDB" id="254906"/>
<dbReference type="Pumba" id="Q8CFE3"/>
<dbReference type="ABCD" id="Q8CFE3">
    <property type="antibodies" value="1 sequenced antibody"/>
</dbReference>
<dbReference type="Antibodypedia" id="4532">
    <property type="antibodies" value="284 antibodies from 34 providers"/>
</dbReference>
<dbReference type="DNASU" id="217864"/>
<dbReference type="Ensembl" id="ENSMUST00000084968.14">
    <property type="protein sequence ID" value="ENSMUSP00000082034.8"/>
    <property type="gene ID" value="ENSMUSG00000037896.18"/>
</dbReference>
<dbReference type="GeneID" id="217864"/>
<dbReference type="KEGG" id="mmu:217864"/>
<dbReference type="UCSC" id="uc007pck.1">
    <property type="organism name" value="mouse"/>
</dbReference>
<dbReference type="AGR" id="MGI:106340"/>
<dbReference type="CTD" id="23186"/>
<dbReference type="MGI" id="MGI:106340">
    <property type="gene designation" value="Rcor1"/>
</dbReference>
<dbReference type="VEuPathDB" id="HostDB:ENSMUSG00000037896"/>
<dbReference type="eggNOG" id="KOG1194">
    <property type="taxonomic scope" value="Eukaryota"/>
</dbReference>
<dbReference type="GeneTree" id="ENSGT00940000155654"/>
<dbReference type="InParanoid" id="Q8CFE3"/>
<dbReference type="OrthoDB" id="10064338at2759"/>
<dbReference type="PhylomeDB" id="Q8CFE3"/>
<dbReference type="TreeFam" id="TF106450"/>
<dbReference type="Reactome" id="R-MMU-3214815">
    <property type="pathway name" value="HDACs deacetylate histones"/>
</dbReference>
<dbReference type="Reactome" id="R-MMU-983231">
    <property type="pathway name" value="Factors involved in megakaryocyte development and platelet production"/>
</dbReference>
<dbReference type="BioGRID-ORCS" id="217864">
    <property type="hits" value="7 hits in 119 CRISPR screens"/>
</dbReference>
<dbReference type="ChiTaRS" id="Rcor1">
    <property type="organism name" value="mouse"/>
</dbReference>
<dbReference type="PRO" id="PR:Q8CFE3"/>
<dbReference type="Proteomes" id="UP000000589">
    <property type="component" value="Chromosome 12"/>
</dbReference>
<dbReference type="RNAct" id="Q8CFE3">
    <property type="molecule type" value="protein"/>
</dbReference>
<dbReference type="Bgee" id="ENSMUSG00000037896">
    <property type="expression patterns" value="Expressed in hair follicle and 262 other cell types or tissues"/>
</dbReference>
<dbReference type="ExpressionAtlas" id="Q8CFE3">
    <property type="expression patterns" value="baseline and differential"/>
</dbReference>
<dbReference type="GO" id="GO:1990391">
    <property type="term" value="C:DNA repair complex"/>
    <property type="evidence" value="ECO:0000266"/>
    <property type="project" value="MGI"/>
</dbReference>
<dbReference type="GO" id="GO:0005654">
    <property type="term" value="C:nucleoplasm"/>
    <property type="evidence" value="ECO:0007669"/>
    <property type="project" value="Ensembl"/>
</dbReference>
<dbReference type="GO" id="GO:0017053">
    <property type="term" value="C:transcription repressor complex"/>
    <property type="evidence" value="ECO:0007669"/>
    <property type="project" value="Ensembl"/>
</dbReference>
<dbReference type="GO" id="GO:0003682">
    <property type="term" value="F:chromatin binding"/>
    <property type="evidence" value="ECO:0000314"/>
    <property type="project" value="MGI"/>
</dbReference>
<dbReference type="GO" id="GO:0019899">
    <property type="term" value="F:enzyme binding"/>
    <property type="evidence" value="ECO:0000353"/>
    <property type="project" value="MGI"/>
</dbReference>
<dbReference type="GO" id="GO:0003714">
    <property type="term" value="F:transcription corepressor activity"/>
    <property type="evidence" value="ECO:0000314"/>
    <property type="project" value="GO_Central"/>
</dbReference>
<dbReference type="GO" id="GO:0006325">
    <property type="term" value="P:chromatin organization"/>
    <property type="evidence" value="ECO:0007669"/>
    <property type="project" value="UniProtKB-KW"/>
</dbReference>
<dbReference type="GO" id="GO:0030218">
    <property type="term" value="P:erythrocyte differentiation"/>
    <property type="evidence" value="ECO:0000315"/>
    <property type="project" value="UniProtKB"/>
</dbReference>
<dbReference type="GO" id="GO:0010629">
    <property type="term" value="P:negative regulation of gene expression"/>
    <property type="evidence" value="ECO:0000314"/>
    <property type="project" value="UniProtKB"/>
</dbReference>
<dbReference type="GO" id="GO:0045654">
    <property type="term" value="P:positive regulation of megakaryocyte differentiation"/>
    <property type="evidence" value="ECO:0000315"/>
    <property type="project" value="UniProtKB"/>
</dbReference>
<dbReference type="CDD" id="cd00167">
    <property type="entry name" value="SANT"/>
    <property type="match status" value="1"/>
</dbReference>
<dbReference type="FunFam" id="1.20.58.1880:FF:000001">
    <property type="entry name" value="REST corepressor 1"/>
    <property type="match status" value="1"/>
</dbReference>
<dbReference type="FunFam" id="1.10.10.60:FF:000033">
    <property type="entry name" value="REST corepressor 3"/>
    <property type="match status" value="1"/>
</dbReference>
<dbReference type="FunFam" id="4.10.1240.50:FF:000002">
    <property type="entry name" value="REST corepressor isoform X1"/>
    <property type="match status" value="1"/>
</dbReference>
<dbReference type="Gene3D" id="1.20.58.1880">
    <property type="match status" value="1"/>
</dbReference>
<dbReference type="Gene3D" id="4.10.1240.50">
    <property type="match status" value="1"/>
</dbReference>
<dbReference type="Gene3D" id="1.10.10.60">
    <property type="entry name" value="Homeodomain-like"/>
    <property type="match status" value="1"/>
</dbReference>
<dbReference type="InterPro" id="IPR000949">
    <property type="entry name" value="ELM2_dom"/>
</dbReference>
<dbReference type="InterPro" id="IPR009057">
    <property type="entry name" value="Homeodomain-like_sf"/>
</dbReference>
<dbReference type="InterPro" id="IPR049048">
    <property type="entry name" value="REST_helical"/>
</dbReference>
<dbReference type="InterPro" id="IPR001005">
    <property type="entry name" value="SANT/Myb"/>
</dbReference>
<dbReference type="InterPro" id="IPR017884">
    <property type="entry name" value="SANT_dom"/>
</dbReference>
<dbReference type="InterPro" id="IPR051066">
    <property type="entry name" value="Trans_reg/Corepressor"/>
</dbReference>
<dbReference type="PANTHER" id="PTHR16089:SF11">
    <property type="entry name" value="REST COREPRESSOR 1"/>
    <property type="match status" value="1"/>
</dbReference>
<dbReference type="PANTHER" id="PTHR16089">
    <property type="entry name" value="REST COREPRESSOR COREST PROTEIN-RELATED"/>
    <property type="match status" value="1"/>
</dbReference>
<dbReference type="Pfam" id="PF01448">
    <property type="entry name" value="ELM2"/>
    <property type="match status" value="1"/>
</dbReference>
<dbReference type="Pfam" id="PF00249">
    <property type="entry name" value="Myb_DNA-binding"/>
    <property type="match status" value="2"/>
</dbReference>
<dbReference type="Pfam" id="PF20878">
    <property type="entry name" value="REST_helical"/>
    <property type="match status" value="1"/>
</dbReference>
<dbReference type="SMART" id="SM01189">
    <property type="entry name" value="ELM2"/>
    <property type="match status" value="1"/>
</dbReference>
<dbReference type="SMART" id="SM00717">
    <property type="entry name" value="SANT"/>
    <property type="match status" value="2"/>
</dbReference>
<dbReference type="SUPFAM" id="SSF46689">
    <property type="entry name" value="Homeodomain-like"/>
    <property type="match status" value="2"/>
</dbReference>
<dbReference type="PROSITE" id="PS51156">
    <property type="entry name" value="ELM2"/>
    <property type="match status" value="1"/>
</dbReference>
<dbReference type="PROSITE" id="PS51293">
    <property type="entry name" value="SANT"/>
    <property type="match status" value="2"/>
</dbReference>
<proteinExistence type="evidence at protein level"/>
<sequence length="480" mass="52715">MPAMVEKGPEVSGKRRGRNTAASAASAAASAASAAASAAASAGTASASAAAAASAAAAPNNGQNKSLAAAAPNGNSGSNSWEEGSSGSSSDEEHGGGGMRVGPQYQAAVPDFDPAKLARRSQERDNLGMLVWSPNQSLSEAKLDEYIAIAKEKHGYNMEQALGMLFWHKHNIEKSLADLPNFTPFPDEWTVEDKVLFEQAFSFHGKTFHRIQQMLPDKSIASLVKFYYSWKKTRTKTSVMDRHARKQKREREESEDELEETNGSNPVDIEIDPNKESKKEVPPTETVPQVKKEKHSTQAKNRAKRKPPKGMFLSQEDVEAVSANATAATTVLRQLDMELVSIKRQIQNIKQTNSALKEKLDGGIEPYRLPEVIQKCNARWTTEEQLLAVQAIRKYGRDFQAISDVIGNKSVVQVKNFFVNYRRRFNIDEVLQEWEAEHGKDETNGPANQKPVKSPESSIKIPEEEDEAASVLDVRYASAS</sequence>
<organism>
    <name type="scientific">Mus musculus</name>
    <name type="common">Mouse</name>
    <dbReference type="NCBI Taxonomy" id="10090"/>
    <lineage>
        <taxon>Eukaryota</taxon>
        <taxon>Metazoa</taxon>
        <taxon>Chordata</taxon>
        <taxon>Craniata</taxon>
        <taxon>Vertebrata</taxon>
        <taxon>Euteleostomi</taxon>
        <taxon>Mammalia</taxon>
        <taxon>Eutheria</taxon>
        <taxon>Euarchontoglires</taxon>
        <taxon>Glires</taxon>
        <taxon>Rodentia</taxon>
        <taxon>Myomorpha</taxon>
        <taxon>Muroidea</taxon>
        <taxon>Muridae</taxon>
        <taxon>Murinae</taxon>
        <taxon>Mus</taxon>
        <taxon>Mus</taxon>
    </lineage>
</organism>
<keyword id="KW-0156">Chromatin regulator</keyword>
<keyword id="KW-0175">Coiled coil</keyword>
<keyword id="KW-1017">Isopeptide bond</keyword>
<keyword id="KW-0539">Nucleus</keyword>
<keyword id="KW-0597">Phosphoprotein</keyword>
<keyword id="KW-1185">Reference proteome</keyword>
<keyword id="KW-0677">Repeat</keyword>
<keyword id="KW-0678">Repressor</keyword>
<keyword id="KW-0804">Transcription</keyword>
<keyword id="KW-0805">Transcription regulation</keyword>
<keyword id="KW-0832">Ubl conjugation</keyword>
<protein>
    <recommendedName>
        <fullName>REST corepressor 1</fullName>
    </recommendedName>
    <alternativeName>
        <fullName>Protein CoREST</fullName>
    </alternativeName>
</protein>